<proteinExistence type="evidence at protein level"/>
<reference key="1">
    <citation type="journal article" date="1998" name="Nature">
        <title>The complete genome of the hyperthermophilic bacterium Aquifex aeolicus.</title>
        <authorList>
            <person name="Deckert G."/>
            <person name="Warren P.V."/>
            <person name="Gaasterland T."/>
            <person name="Young W.G."/>
            <person name="Lenox A.L."/>
            <person name="Graham D.E."/>
            <person name="Overbeek R."/>
            <person name="Snead M.A."/>
            <person name="Keller M."/>
            <person name="Aujay M."/>
            <person name="Huber R."/>
            <person name="Feldman R.A."/>
            <person name="Short J.M."/>
            <person name="Olsen G.J."/>
            <person name="Swanson R.V."/>
        </authorList>
    </citation>
    <scope>NUCLEOTIDE SEQUENCE [LARGE SCALE GENOMIC DNA]</scope>
    <source>
        <strain>VF5</strain>
    </source>
</reference>
<keyword id="KW-0002">3D-structure</keyword>
<keyword id="KW-0046">Antibiotic resistance</keyword>
<keyword id="KW-0121">Carboxypeptidase</keyword>
<keyword id="KW-0997">Cell inner membrane</keyword>
<keyword id="KW-1003">Cell membrane</keyword>
<keyword id="KW-0133">Cell shape</keyword>
<keyword id="KW-0961">Cell wall biogenesis/degradation</keyword>
<keyword id="KW-0328">Glycosyltransferase</keyword>
<keyword id="KW-0378">Hydrolase</keyword>
<keyword id="KW-0472">Membrane</keyword>
<keyword id="KW-0511">Multifunctional enzyme</keyword>
<keyword id="KW-0573">Peptidoglycan synthesis</keyword>
<keyword id="KW-0645">Protease</keyword>
<keyword id="KW-1185">Reference proteome</keyword>
<keyword id="KW-0735">Signal-anchor</keyword>
<keyword id="KW-0808">Transferase</keyword>
<keyword id="KW-0812">Transmembrane</keyword>
<keyword id="KW-1133">Transmembrane helix</keyword>
<dbReference type="EC" id="2.4.99.28" evidence="2"/>
<dbReference type="EC" id="3.4.16.4" evidence="2"/>
<dbReference type="EMBL" id="AE000657">
    <property type="protein sequence ID" value="AAC06835.1"/>
    <property type="molecule type" value="Genomic_DNA"/>
</dbReference>
<dbReference type="PIR" id="F70355">
    <property type="entry name" value="F70355"/>
</dbReference>
<dbReference type="RefSeq" id="NP_213434.1">
    <property type="nucleotide sequence ID" value="NC_000918.1"/>
</dbReference>
<dbReference type="RefSeq" id="WP_010880372.1">
    <property type="nucleotide sequence ID" value="NC_000918.1"/>
</dbReference>
<dbReference type="PDB" id="2OQO">
    <property type="method" value="X-ray"/>
    <property type="resolution" value="2.10 A"/>
    <property type="chains" value="A=51-243"/>
</dbReference>
<dbReference type="PDB" id="3D3H">
    <property type="method" value="X-ray"/>
    <property type="resolution" value="2.31 A"/>
    <property type="chains" value="A=51-243"/>
</dbReference>
<dbReference type="PDB" id="3NB6">
    <property type="method" value="X-ray"/>
    <property type="resolution" value="2.70 A"/>
    <property type="chains" value="A=51-243"/>
</dbReference>
<dbReference type="PDB" id="3NB7">
    <property type="method" value="X-ray"/>
    <property type="resolution" value="2.65 A"/>
    <property type="chains" value="A=51-243"/>
</dbReference>
<dbReference type="PDBsum" id="2OQO"/>
<dbReference type="PDBsum" id="3D3H"/>
<dbReference type="PDBsum" id="3NB6"/>
<dbReference type="PDBsum" id="3NB7"/>
<dbReference type="SMR" id="O66874"/>
<dbReference type="DIP" id="DIP-60897N"/>
<dbReference type="FunCoup" id="O66874">
    <property type="interactions" value="265"/>
</dbReference>
<dbReference type="STRING" id="224324.aq_624"/>
<dbReference type="CAZy" id="GT51">
    <property type="family name" value="Glycosyltransferase Family 51"/>
</dbReference>
<dbReference type="EnsemblBacteria" id="AAC06835">
    <property type="protein sequence ID" value="AAC06835"/>
    <property type="gene ID" value="aq_624"/>
</dbReference>
<dbReference type="KEGG" id="aae:aq_624"/>
<dbReference type="PATRIC" id="fig|224324.8.peg.507"/>
<dbReference type="eggNOG" id="COG5009">
    <property type="taxonomic scope" value="Bacteria"/>
</dbReference>
<dbReference type="HOGENOM" id="CLU_006354_2_4_0"/>
<dbReference type="InParanoid" id="O66874"/>
<dbReference type="OrthoDB" id="9766909at2"/>
<dbReference type="BRENDA" id="2.4.1.129">
    <property type="organism ID" value="396"/>
</dbReference>
<dbReference type="UniPathway" id="UPA00219"/>
<dbReference type="EvolutionaryTrace" id="O66874"/>
<dbReference type="Proteomes" id="UP000000798">
    <property type="component" value="Chromosome"/>
</dbReference>
<dbReference type="GO" id="GO:0030288">
    <property type="term" value="C:outer membrane-bounded periplasmic space"/>
    <property type="evidence" value="ECO:0000318"/>
    <property type="project" value="GO_Central"/>
</dbReference>
<dbReference type="GO" id="GO:0005886">
    <property type="term" value="C:plasma membrane"/>
    <property type="evidence" value="ECO:0007669"/>
    <property type="project" value="UniProtKB-SubCell"/>
</dbReference>
<dbReference type="GO" id="GO:0042802">
    <property type="term" value="F:identical protein binding"/>
    <property type="evidence" value="ECO:0000353"/>
    <property type="project" value="IntAct"/>
</dbReference>
<dbReference type="GO" id="GO:0008658">
    <property type="term" value="F:penicillin binding"/>
    <property type="evidence" value="ECO:0007669"/>
    <property type="project" value="InterPro"/>
</dbReference>
<dbReference type="GO" id="GO:0008955">
    <property type="term" value="F:peptidoglycan glycosyltransferase activity"/>
    <property type="evidence" value="ECO:0000318"/>
    <property type="project" value="GO_Central"/>
</dbReference>
<dbReference type="GO" id="GO:0009002">
    <property type="term" value="F:serine-type D-Ala-D-Ala carboxypeptidase activity"/>
    <property type="evidence" value="ECO:0007669"/>
    <property type="project" value="UniProtKB-EC"/>
</dbReference>
<dbReference type="GO" id="GO:0071555">
    <property type="term" value="P:cell wall organization"/>
    <property type="evidence" value="ECO:0007669"/>
    <property type="project" value="UniProtKB-KW"/>
</dbReference>
<dbReference type="GO" id="GO:0009252">
    <property type="term" value="P:peptidoglycan biosynthetic process"/>
    <property type="evidence" value="ECO:0000318"/>
    <property type="project" value="GO_Central"/>
</dbReference>
<dbReference type="GO" id="GO:0006508">
    <property type="term" value="P:proteolysis"/>
    <property type="evidence" value="ECO:0007669"/>
    <property type="project" value="UniProtKB-KW"/>
</dbReference>
<dbReference type="GO" id="GO:0008360">
    <property type="term" value="P:regulation of cell shape"/>
    <property type="evidence" value="ECO:0007669"/>
    <property type="project" value="UniProtKB-KW"/>
</dbReference>
<dbReference type="GO" id="GO:0046677">
    <property type="term" value="P:response to antibiotic"/>
    <property type="evidence" value="ECO:0007669"/>
    <property type="project" value="UniProtKB-KW"/>
</dbReference>
<dbReference type="FunFam" id="1.10.3810.10:FF:000003">
    <property type="entry name" value="Penicillin-binding protein 1a"/>
    <property type="match status" value="1"/>
</dbReference>
<dbReference type="Gene3D" id="1.10.3810.10">
    <property type="entry name" value="Biosynthetic peptidoglycan transglycosylase-like"/>
    <property type="match status" value="1"/>
</dbReference>
<dbReference type="Gene3D" id="3.40.710.10">
    <property type="entry name" value="DD-peptidase/beta-lactamase superfamily"/>
    <property type="match status" value="2"/>
</dbReference>
<dbReference type="InterPro" id="IPR012338">
    <property type="entry name" value="Beta-lactam/transpept-like"/>
</dbReference>
<dbReference type="InterPro" id="IPR001264">
    <property type="entry name" value="Glyco_trans_51"/>
</dbReference>
<dbReference type="InterPro" id="IPR050396">
    <property type="entry name" value="Glycosyltr_51/Transpeptidase"/>
</dbReference>
<dbReference type="InterPro" id="IPR023346">
    <property type="entry name" value="Lysozyme-like_dom_sf"/>
</dbReference>
<dbReference type="InterPro" id="IPR036950">
    <property type="entry name" value="PBP_transglycosylase"/>
</dbReference>
<dbReference type="InterPro" id="IPR001460">
    <property type="entry name" value="PCN-bd_Tpept"/>
</dbReference>
<dbReference type="NCBIfam" id="TIGR02074">
    <property type="entry name" value="PBP_1a_fam"/>
    <property type="match status" value="1"/>
</dbReference>
<dbReference type="PANTHER" id="PTHR32282">
    <property type="entry name" value="BINDING PROTEIN TRANSPEPTIDASE, PUTATIVE-RELATED"/>
    <property type="match status" value="1"/>
</dbReference>
<dbReference type="PANTHER" id="PTHR32282:SF11">
    <property type="entry name" value="PENICILLIN-BINDING PROTEIN 1B"/>
    <property type="match status" value="1"/>
</dbReference>
<dbReference type="Pfam" id="PF00912">
    <property type="entry name" value="Transgly"/>
    <property type="match status" value="1"/>
</dbReference>
<dbReference type="Pfam" id="PF00905">
    <property type="entry name" value="Transpeptidase"/>
    <property type="match status" value="1"/>
</dbReference>
<dbReference type="SUPFAM" id="SSF56601">
    <property type="entry name" value="beta-lactamase/transpeptidase-like"/>
    <property type="match status" value="1"/>
</dbReference>
<dbReference type="SUPFAM" id="SSF53955">
    <property type="entry name" value="Lysozyme-like"/>
    <property type="match status" value="1"/>
</dbReference>
<name>PBPA_AQUAE</name>
<feature type="chain" id="PRO_0000083178" description="Penicillin-binding protein 1A">
    <location>
        <begin position="1"/>
        <end position="726"/>
    </location>
</feature>
<feature type="topological domain" description="Cytoplasmic" evidence="4">
    <location>
        <begin position="1"/>
        <end position="3"/>
    </location>
</feature>
<feature type="transmembrane region" description="Helical; Signal-anchor for type II membrane protein" evidence="4">
    <location>
        <begin position="4"/>
        <end position="24"/>
    </location>
</feature>
<feature type="topological domain" description="Periplasmic" evidence="4">
    <location>
        <begin position="25"/>
        <end position="726"/>
    </location>
</feature>
<feature type="region of interest" description="Transglycosylase">
    <location>
        <begin position="45"/>
        <end position="213"/>
    </location>
</feature>
<feature type="region of interest" description="Transpeptidase">
    <location>
        <begin position="379"/>
        <end position="662"/>
    </location>
</feature>
<feature type="active site" description="Proton donor; for transglycosylase activity" evidence="3">
    <location>
        <position position="83"/>
    </location>
</feature>
<feature type="active site" description="Acyl-ester intermediate; for transpeptidase activity" evidence="3">
    <location>
        <position position="432"/>
    </location>
</feature>
<feature type="helix" evidence="6">
    <location>
        <begin position="60"/>
        <end position="62"/>
    </location>
</feature>
<feature type="helix" evidence="6">
    <location>
        <begin position="68"/>
        <end position="70"/>
    </location>
</feature>
<feature type="helix" evidence="6">
    <location>
        <begin position="73"/>
        <end position="83"/>
    </location>
</feature>
<feature type="turn" evidence="6">
    <location>
        <begin position="85"/>
        <end position="89"/>
    </location>
</feature>
<feature type="strand" evidence="6">
    <location>
        <begin position="90"/>
        <end position="93"/>
    </location>
</feature>
<feature type="helix" evidence="6">
    <location>
        <begin position="95"/>
        <end position="102"/>
    </location>
</feature>
<feature type="helix" evidence="6">
    <location>
        <begin position="118"/>
        <end position="124"/>
    </location>
</feature>
<feature type="strand" evidence="6">
    <location>
        <begin position="127"/>
        <end position="129"/>
    </location>
</feature>
<feature type="helix" evidence="6">
    <location>
        <begin position="134"/>
        <end position="150"/>
    </location>
</feature>
<feature type="helix" evidence="6">
    <location>
        <begin position="153"/>
        <end position="163"/>
    </location>
</feature>
<feature type="helix" evidence="6">
    <location>
        <begin position="173"/>
        <end position="181"/>
    </location>
</feature>
<feature type="helix" evidence="6">
    <location>
        <begin position="185"/>
        <end position="187"/>
    </location>
</feature>
<feature type="helix" evidence="6">
    <location>
        <begin position="190"/>
        <end position="198"/>
    </location>
</feature>
<feature type="helix" evidence="6">
    <location>
        <begin position="203"/>
        <end position="206"/>
    </location>
</feature>
<feature type="turn" evidence="6">
    <location>
        <begin position="208"/>
        <end position="210"/>
    </location>
</feature>
<feature type="helix" evidence="6">
    <location>
        <begin position="212"/>
        <end position="228"/>
    </location>
</feature>
<feature type="helix" evidence="6">
    <location>
        <begin position="234"/>
        <end position="241"/>
    </location>
</feature>
<sequence>MKKLVIGILGIVIALFVGLLVFLIPIYKNLPDPKLLESWTPPQASEVYDAKGRLYGTIGIQKRFYVSIDKIPEHVINAFVATEDRNFWHHFGIDPVAIVRAAIVNYRAGRIVQGGSTITQQLAKNLFLTRERTLERKIKEALLAIKIERTFDKKKIMELYLNQIYLGSGAYGVEAAAQVYFGKHVWELSLDEAALLAALPKAPAKYNPFYHPERALQRRNLVLKRMLEEGYITPEQYEEAVNKPLTVKKENKYKFSDYFLDMVKSYVFNKYGEIAYKGRLKIYTTIDLDYQKIAQKSLEEGLKRVAKIIGLPFLPKSEEDMELAYEKEAQLKRLKRGKIYVAKILKYDGNFMKVEIHGKKLKGEIKGLNTEGHKYVFVKYLGGNRAEIIPDLEGSLVSIDVKTGEIKAIVGGRSYAYSQFNRAVKALRQPGSAIKPVIYLSALLKGMTQISTIDASSKPYYDPSKGEDWIPKNYDEKEYGNVTLRYALAHSINTAAVNLLDKVGFELVLEVGKKVGLDNLKPYYSLALGTVEVTPLQLTAAYQVFANLGTECKPFFIKKIVDENGEVLEENVPECEEVLPKPETRVPVDMLRAVVLEGTARRASVLDRIVAGKTGTTDDFQDAWFVGFSPYIVTGVWVGYDVKKSLGKHMSGSRVALPIWIDYMKVVTRMYPNEDFELPPENIVVNINPKDLVLADETCEGVPMVFVKGTEPHITCSDLNAILGLR</sequence>
<organism>
    <name type="scientific">Aquifex aeolicus (strain VF5)</name>
    <dbReference type="NCBI Taxonomy" id="224324"/>
    <lineage>
        <taxon>Bacteria</taxon>
        <taxon>Pseudomonadati</taxon>
        <taxon>Aquificota</taxon>
        <taxon>Aquificia</taxon>
        <taxon>Aquificales</taxon>
        <taxon>Aquificaceae</taxon>
        <taxon>Aquifex</taxon>
    </lineage>
</organism>
<gene>
    <name type="primary">mrcA</name>
    <name type="synonym">ponA</name>
    <name type="ordered locus">aq_624</name>
</gene>
<evidence type="ECO:0000250" key="1"/>
<evidence type="ECO:0000250" key="2">
    <source>
        <dbReference type="UniProtKB" id="P02918"/>
    </source>
</evidence>
<evidence type="ECO:0000250" key="3">
    <source>
        <dbReference type="UniProtKB" id="P02919"/>
    </source>
</evidence>
<evidence type="ECO:0000255" key="4"/>
<evidence type="ECO:0000305" key="5"/>
<evidence type="ECO:0007829" key="6">
    <source>
        <dbReference type="PDB" id="2OQO"/>
    </source>
</evidence>
<protein>
    <recommendedName>
        <fullName>Penicillin-binding protein 1A</fullName>
        <shortName>PBP-1a</shortName>
        <shortName>PBP1a</shortName>
    </recommendedName>
    <domain>
        <recommendedName>
            <fullName>Penicillin-insensitive transglycosylase</fullName>
            <ecNumber evidence="2">2.4.99.28</ecNumber>
        </recommendedName>
        <alternativeName>
            <fullName>Peptidoglycan TGase</fullName>
        </alternativeName>
    </domain>
    <domain>
        <recommendedName>
            <fullName>Penicillin-sensitive transpeptidase</fullName>
            <ecNumber evidence="2">3.4.16.4</ecNumber>
        </recommendedName>
        <alternativeName>
            <fullName>DD-transpeptidase</fullName>
        </alternativeName>
    </domain>
</protein>
<comment type="catalytic activity">
    <reaction evidence="2">
        <text>[GlcNAc-(1-&gt;4)-Mur2Ac(oyl-L-Ala-gamma-D-Glu-L-Lys-D-Ala-D-Ala)](n)-di-trans,octa-cis-undecaprenyl diphosphate + beta-D-GlcNAc-(1-&gt;4)-Mur2Ac(oyl-L-Ala-gamma-D-Glu-L-Lys-D-Ala-D-Ala)-di-trans,octa-cis-undecaprenyl diphosphate = [GlcNAc-(1-&gt;4)-Mur2Ac(oyl-L-Ala-gamma-D-Glu-L-Lys-D-Ala-D-Ala)](n+1)-di-trans,octa-cis-undecaprenyl diphosphate + di-trans,octa-cis-undecaprenyl diphosphate + H(+)</text>
        <dbReference type="Rhea" id="RHEA:23708"/>
        <dbReference type="Rhea" id="RHEA-COMP:9602"/>
        <dbReference type="Rhea" id="RHEA-COMP:9603"/>
        <dbReference type="ChEBI" id="CHEBI:15378"/>
        <dbReference type="ChEBI" id="CHEBI:58405"/>
        <dbReference type="ChEBI" id="CHEBI:60033"/>
        <dbReference type="ChEBI" id="CHEBI:78435"/>
        <dbReference type="EC" id="2.4.99.28"/>
    </reaction>
</comment>
<comment type="catalytic activity">
    <reaction evidence="2">
        <text>Preferential cleavage: (Ac)2-L-Lys-D-Ala-|-D-Ala. Also transpeptidation of peptidyl-alanyl moieties that are N-acyl substituents of D-alanine.</text>
        <dbReference type="EC" id="3.4.16.4"/>
    </reaction>
</comment>
<comment type="pathway">
    <text>Cell wall biogenesis; peptidoglycan biosynthesis.</text>
</comment>
<comment type="interaction">
    <interactant intactId="EBI-15625175">
        <id>O66874</id>
    </interactant>
    <interactant intactId="EBI-15625175">
        <id>O66874</id>
        <label>mrcA</label>
    </interactant>
    <organismsDiffer>false</organismsDiffer>
    <experiments>2</experiments>
</comment>
<comment type="subcellular location">
    <subcellularLocation>
        <location evidence="1">Cell inner membrane</location>
        <topology evidence="1">Single-pass type II membrane protein</topology>
    </subcellularLocation>
</comment>
<comment type="similarity">
    <text evidence="5">In the N-terminal section; belongs to the glycosyltransferase 51 family.</text>
</comment>
<comment type="similarity">
    <text evidence="5">In the C-terminal section; belongs to the transpeptidase family.</text>
</comment>
<accession>O66874</accession>